<comment type="function">
    <text evidence="1">Part of the Sec protein translocase complex. Interacts with the SecYEG preprotein conducting channel. Has a central role in coupling the hydrolysis of ATP to the transfer of proteins into and across the cell membrane, serving as an ATP-driven molecular motor driving the stepwise translocation of polypeptide chains across the membrane.</text>
</comment>
<comment type="function">
    <text evidence="1">Probably participates in protein translocation into and across both the cytoplasmic and thylakoid membranes in cyanobacterial cells.</text>
</comment>
<comment type="catalytic activity">
    <reaction evidence="1">
        <text>ATP + H2O + cellular proteinSide 1 = ADP + phosphate + cellular proteinSide 2.</text>
        <dbReference type="EC" id="7.4.2.8"/>
    </reaction>
</comment>
<comment type="subunit">
    <text evidence="1">Monomer and homodimer. Part of the essential Sec protein translocation apparatus which comprises SecA, SecYEG and auxiliary proteins SecDF. Other proteins may also be involved.</text>
</comment>
<comment type="subcellular location">
    <subcellularLocation>
        <location evidence="1">Cell inner membrane</location>
        <topology evidence="1">Peripheral membrane protein</topology>
        <orientation evidence="1">Cytoplasmic side</orientation>
    </subcellularLocation>
    <subcellularLocation>
        <location evidence="1">Cellular thylakoid membrane</location>
        <topology evidence="1">Peripheral membrane protein</topology>
        <orientation evidence="1">Cytoplasmic side</orientation>
    </subcellularLocation>
    <subcellularLocation>
        <location evidence="1">Cytoplasm</location>
    </subcellularLocation>
</comment>
<comment type="similarity">
    <text evidence="1">Belongs to the SecA family.</text>
</comment>
<accession>Q2JJ09</accession>
<proteinExistence type="inferred from homology"/>
<organism>
    <name type="scientific">Synechococcus sp. (strain JA-2-3B'a(2-13))</name>
    <name type="common">Cyanobacteria bacterium Yellowstone B-Prime</name>
    <dbReference type="NCBI Taxonomy" id="321332"/>
    <lineage>
        <taxon>Bacteria</taxon>
        <taxon>Bacillati</taxon>
        <taxon>Cyanobacteriota</taxon>
        <taxon>Cyanophyceae</taxon>
        <taxon>Synechococcales</taxon>
        <taxon>Synechococcaceae</taxon>
        <taxon>Synechococcus</taxon>
    </lineage>
</organism>
<reference key="1">
    <citation type="journal article" date="2007" name="ISME J.">
        <title>Population level functional diversity in a microbial community revealed by comparative genomic and metagenomic analyses.</title>
        <authorList>
            <person name="Bhaya D."/>
            <person name="Grossman A.R."/>
            <person name="Steunou A.-S."/>
            <person name="Khuri N."/>
            <person name="Cohan F.M."/>
            <person name="Hamamura N."/>
            <person name="Melendrez M.C."/>
            <person name="Bateson M.M."/>
            <person name="Ward D.M."/>
            <person name="Heidelberg J.F."/>
        </authorList>
    </citation>
    <scope>NUCLEOTIDE SEQUENCE [LARGE SCALE GENOMIC DNA]</scope>
    <source>
        <strain>JA-2-3B'a(2-13)</strain>
    </source>
</reference>
<name>SECA_SYNJB</name>
<sequence length="957" mass="108399">MLQTLQKLLGDPNDRKIRQYRPVVKLINSLEIEIASLSDAELKAKTTEFRQRLDRGESLDDLLPEAFAVVREAAKRVLNLRHYDVQLIGGMVLHEGQIAEMKTGEGKTLVATLPAYLNGLTGKGVHIVTVNGYLARRDSEWMGQVHRFLGLTVGLVQEGMSPEEKRRSYNCDITYCTNSELGFDYLRDNMATDIKEVMQRPFNYCIIDEVDSILIDEARTPLIISGQVARPSEKYLRAAQVARELIRDEHYEVDEKARNVILTDEGFEAAERLLGVSDLFDPKDPWAHFVFNAVKAKELFIKDVHYIVRNQEVVIVDEFTGRVLPGRRWSDGLHQAVEAKEGVPIQSESQTLATITYQNLFLLYPKLSGMTGTARTEEAEFGKTYNLEVTVIPTNRPIRRKDAPDLVYKTERGKWQAVAEEIAHMHAQGRPVLVGTTSVEKSERLSAMLKEMGIPHNLLNAKPENVEREAEIIAQAGRKGAVTIATNMAGRGTDIILGGNAEYMARLKLRERLMPKLAQLDADNPLGSVQMVGRGGGQGFGGTAPKPKKSWTVVSPNFYPCELSARTNQALDEVVAAAVTKYGLNRLPELVVEDLIAVASEKAPVQDPLILQLREVYNSIKAEYEKITEAEHEEVVRLGGLHVIGTERHESRRIDNQLRGRAGRQGDPGSSRFFLSLEDNLLKIFGGERVAKLMDMFRVEEDMPIEHPLLSSSLENAQRKVEVYYFDMRKQVFEYDEVMNNQRRAIYSERRRILEGENLKTKILDYVRKTVGEIVRAHVNPELPPEEWEIDKLTAKMQEFVPLLKQNLKVEDLQDLSYEQILDYLIKQAELAYEAKEAFLDTFEPGLMRKAERFFLLQQVDTLWREHLQQMEALREAVGLRGYGQKDPLIEYKNEGYELFLEMMDNIRRNTVYNLFIFTPQIVQVPQASRPAPAPTAAASPDPSSASGVVEADFTEE</sequence>
<feature type="chain" id="PRO_0000318471" description="Protein translocase subunit SecA">
    <location>
        <begin position="1"/>
        <end position="957"/>
    </location>
</feature>
<feature type="region of interest" description="Disordered" evidence="2">
    <location>
        <begin position="929"/>
        <end position="957"/>
    </location>
</feature>
<feature type="compositionally biased region" description="Low complexity" evidence="2">
    <location>
        <begin position="929"/>
        <end position="947"/>
    </location>
</feature>
<feature type="binding site" evidence="1">
    <location>
        <position position="86"/>
    </location>
    <ligand>
        <name>ATP</name>
        <dbReference type="ChEBI" id="CHEBI:30616"/>
    </ligand>
</feature>
<feature type="binding site" evidence="1">
    <location>
        <begin position="104"/>
        <end position="108"/>
    </location>
    <ligand>
        <name>ATP</name>
        <dbReference type="ChEBI" id="CHEBI:30616"/>
    </ligand>
</feature>
<feature type="binding site" evidence="1">
    <location>
        <position position="494"/>
    </location>
    <ligand>
        <name>ATP</name>
        <dbReference type="ChEBI" id="CHEBI:30616"/>
    </ligand>
</feature>
<evidence type="ECO:0000255" key="1">
    <source>
        <dbReference type="HAMAP-Rule" id="MF_01382"/>
    </source>
</evidence>
<evidence type="ECO:0000256" key="2">
    <source>
        <dbReference type="SAM" id="MobiDB-lite"/>
    </source>
</evidence>
<gene>
    <name evidence="1" type="primary">secA</name>
    <name type="ordered locus">CYB_2451</name>
</gene>
<keyword id="KW-0067">ATP-binding</keyword>
<keyword id="KW-0997">Cell inner membrane</keyword>
<keyword id="KW-1003">Cell membrane</keyword>
<keyword id="KW-0963">Cytoplasm</keyword>
<keyword id="KW-0472">Membrane</keyword>
<keyword id="KW-0547">Nucleotide-binding</keyword>
<keyword id="KW-0653">Protein transport</keyword>
<keyword id="KW-1185">Reference proteome</keyword>
<keyword id="KW-0793">Thylakoid</keyword>
<keyword id="KW-1278">Translocase</keyword>
<keyword id="KW-0811">Translocation</keyword>
<keyword id="KW-0813">Transport</keyword>
<dbReference type="EC" id="7.4.2.8" evidence="1"/>
<dbReference type="EMBL" id="CP000240">
    <property type="protein sequence ID" value="ABD03385.1"/>
    <property type="molecule type" value="Genomic_DNA"/>
</dbReference>
<dbReference type="RefSeq" id="WP_011434014.1">
    <property type="nucleotide sequence ID" value="NC_007776.1"/>
</dbReference>
<dbReference type="SMR" id="Q2JJ09"/>
<dbReference type="STRING" id="321332.CYB_2451"/>
<dbReference type="KEGG" id="cyb:CYB_2451"/>
<dbReference type="eggNOG" id="COG0653">
    <property type="taxonomic scope" value="Bacteria"/>
</dbReference>
<dbReference type="HOGENOM" id="CLU_005314_3_0_3"/>
<dbReference type="OrthoDB" id="9805579at2"/>
<dbReference type="Proteomes" id="UP000001938">
    <property type="component" value="Chromosome"/>
</dbReference>
<dbReference type="GO" id="GO:0031522">
    <property type="term" value="C:cell envelope Sec protein transport complex"/>
    <property type="evidence" value="ECO:0007669"/>
    <property type="project" value="TreeGrafter"/>
</dbReference>
<dbReference type="GO" id="GO:0005829">
    <property type="term" value="C:cytosol"/>
    <property type="evidence" value="ECO:0007669"/>
    <property type="project" value="TreeGrafter"/>
</dbReference>
<dbReference type="GO" id="GO:0031676">
    <property type="term" value="C:plasma membrane-derived thylakoid membrane"/>
    <property type="evidence" value="ECO:0007669"/>
    <property type="project" value="UniProtKB-SubCell"/>
</dbReference>
<dbReference type="GO" id="GO:0005524">
    <property type="term" value="F:ATP binding"/>
    <property type="evidence" value="ECO:0007669"/>
    <property type="project" value="UniProtKB-UniRule"/>
</dbReference>
<dbReference type="GO" id="GO:0008564">
    <property type="term" value="F:protein-exporting ATPase activity"/>
    <property type="evidence" value="ECO:0007669"/>
    <property type="project" value="UniProtKB-EC"/>
</dbReference>
<dbReference type="GO" id="GO:0065002">
    <property type="term" value="P:intracellular protein transmembrane transport"/>
    <property type="evidence" value="ECO:0007669"/>
    <property type="project" value="UniProtKB-UniRule"/>
</dbReference>
<dbReference type="GO" id="GO:0017038">
    <property type="term" value="P:protein import"/>
    <property type="evidence" value="ECO:0007669"/>
    <property type="project" value="InterPro"/>
</dbReference>
<dbReference type="GO" id="GO:0006605">
    <property type="term" value="P:protein targeting"/>
    <property type="evidence" value="ECO:0007669"/>
    <property type="project" value="UniProtKB-UniRule"/>
</dbReference>
<dbReference type="GO" id="GO:0043952">
    <property type="term" value="P:protein transport by the Sec complex"/>
    <property type="evidence" value="ECO:0007669"/>
    <property type="project" value="TreeGrafter"/>
</dbReference>
<dbReference type="CDD" id="cd17928">
    <property type="entry name" value="DEXDc_SecA"/>
    <property type="match status" value="1"/>
</dbReference>
<dbReference type="CDD" id="cd18803">
    <property type="entry name" value="SF2_C_secA"/>
    <property type="match status" value="1"/>
</dbReference>
<dbReference type="FunFam" id="3.90.1440.10:FF:000003">
    <property type="entry name" value="Preprotein translocase SecA subunit"/>
    <property type="match status" value="1"/>
</dbReference>
<dbReference type="FunFam" id="3.40.50.300:FF:000429">
    <property type="entry name" value="Preprotein translocase subunit SecA"/>
    <property type="match status" value="1"/>
</dbReference>
<dbReference type="FunFam" id="3.40.50.300:FF:000531">
    <property type="entry name" value="Preprotein translocase subunit SecA"/>
    <property type="match status" value="1"/>
</dbReference>
<dbReference type="FunFam" id="1.10.3060.10:FF:000003">
    <property type="entry name" value="Protein translocase subunit SecA"/>
    <property type="match status" value="1"/>
</dbReference>
<dbReference type="FunFam" id="3.40.50.300:FF:000334">
    <property type="entry name" value="Protein translocase subunit SecA"/>
    <property type="match status" value="1"/>
</dbReference>
<dbReference type="Gene3D" id="1.10.3060.10">
    <property type="entry name" value="Helical scaffold and wing domains of SecA"/>
    <property type="match status" value="1"/>
</dbReference>
<dbReference type="Gene3D" id="3.40.50.300">
    <property type="entry name" value="P-loop containing nucleotide triphosphate hydrolases"/>
    <property type="match status" value="2"/>
</dbReference>
<dbReference type="Gene3D" id="3.90.1440.10">
    <property type="entry name" value="SecA, preprotein cross-linking domain"/>
    <property type="match status" value="1"/>
</dbReference>
<dbReference type="HAMAP" id="MF_01382">
    <property type="entry name" value="SecA"/>
    <property type="match status" value="1"/>
</dbReference>
<dbReference type="InterPro" id="IPR014001">
    <property type="entry name" value="Helicase_ATP-bd"/>
</dbReference>
<dbReference type="InterPro" id="IPR001650">
    <property type="entry name" value="Helicase_C-like"/>
</dbReference>
<dbReference type="InterPro" id="IPR027417">
    <property type="entry name" value="P-loop_NTPase"/>
</dbReference>
<dbReference type="InterPro" id="IPR000185">
    <property type="entry name" value="SecA"/>
</dbReference>
<dbReference type="InterPro" id="IPR020937">
    <property type="entry name" value="SecA_CS"/>
</dbReference>
<dbReference type="InterPro" id="IPR011115">
    <property type="entry name" value="SecA_DEAD"/>
</dbReference>
<dbReference type="InterPro" id="IPR014018">
    <property type="entry name" value="SecA_motor_DEAD"/>
</dbReference>
<dbReference type="InterPro" id="IPR011130">
    <property type="entry name" value="SecA_preprotein_X-link_dom"/>
</dbReference>
<dbReference type="InterPro" id="IPR044722">
    <property type="entry name" value="SecA_SF2_C"/>
</dbReference>
<dbReference type="InterPro" id="IPR011116">
    <property type="entry name" value="SecA_Wing/Scaffold"/>
</dbReference>
<dbReference type="InterPro" id="IPR036266">
    <property type="entry name" value="SecA_Wing/Scaffold_sf"/>
</dbReference>
<dbReference type="InterPro" id="IPR036670">
    <property type="entry name" value="SecA_X-link_sf"/>
</dbReference>
<dbReference type="NCBIfam" id="NF009538">
    <property type="entry name" value="PRK12904.1"/>
    <property type="match status" value="1"/>
</dbReference>
<dbReference type="NCBIfam" id="TIGR00963">
    <property type="entry name" value="secA"/>
    <property type="match status" value="1"/>
</dbReference>
<dbReference type="PANTHER" id="PTHR30612:SF0">
    <property type="entry name" value="CHLOROPLAST PROTEIN-TRANSPORTING ATPASE"/>
    <property type="match status" value="1"/>
</dbReference>
<dbReference type="PANTHER" id="PTHR30612">
    <property type="entry name" value="SECA INNER MEMBRANE COMPONENT OF SEC PROTEIN SECRETION SYSTEM"/>
    <property type="match status" value="1"/>
</dbReference>
<dbReference type="Pfam" id="PF21090">
    <property type="entry name" value="P-loop_SecA"/>
    <property type="match status" value="1"/>
</dbReference>
<dbReference type="Pfam" id="PF07517">
    <property type="entry name" value="SecA_DEAD"/>
    <property type="match status" value="1"/>
</dbReference>
<dbReference type="Pfam" id="PF01043">
    <property type="entry name" value="SecA_PP_bind"/>
    <property type="match status" value="1"/>
</dbReference>
<dbReference type="Pfam" id="PF07516">
    <property type="entry name" value="SecA_SW"/>
    <property type="match status" value="1"/>
</dbReference>
<dbReference type="PRINTS" id="PR00906">
    <property type="entry name" value="SECA"/>
</dbReference>
<dbReference type="SMART" id="SM00957">
    <property type="entry name" value="SecA_DEAD"/>
    <property type="match status" value="1"/>
</dbReference>
<dbReference type="SMART" id="SM00958">
    <property type="entry name" value="SecA_PP_bind"/>
    <property type="match status" value="1"/>
</dbReference>
<dbReference type="SUPFAM" id="SSF81886">
    <property type="entry name" value="Helical scaffold and wing domains of SecA"/>
    <property type="match status" value="1"/>
</dbReference>
<dbReference type="SUPFAM" id="SSF52540">
    <property type="entry name" value="P-loop containing nucleoside triphosphate hydrolases"/>
    <property type="match status" value="2"/>
</dbReference>
<dbReference type="SUPFAM" id="SSF81767">
    <property type="entry name" value="Pre-protein crosslinking domain of SecA"/>
    <property type="match status" value="1"/>
</dbReference>
<dbReference type="PROSITE" id="PS01312">
    <property type="entry name" value="SECA"/>
    <property type="match status" value="1"/>
</dbReference>
<dbReference type="PROSITE" id="PS51196">
    <property type="entry name" value="SECA_MOTOR_DEAD"/>
    <property type="match status" value="1"/>
</dbReference>
<protein>
    <recommendedName>
        <fullName evidence="1">Protein translocase subunit SecA</fullName>
        <ecNumber evidence="1">7.4.2.8</ecNumber>
    </recommendedName>
</protein>